<proteinExistence type="inferred from homology"/>
<organism>
    <name type="scientific">Shigella flexneri serotype 5b (strain 8401)</name>
    <dbReference type="NCBI Taxonomy" id="373384"/>
    <lineage>
        <taxon>Bacteria</taxon>
        <taxon>Pseudomonadati</taxon>
        <taxon>Pseudomonadota</taxon>
        <taxon>Gammaproteobacteria</taxon>
        <taxon>Enterobacterales</taxon>
        <taxon>Enterobacteriaceae</taxon>
        <taxon>Shigella</taxon>
    </lineage>
</organism>
<protein>
    <recommendedName>
        <fullName evidence="1">Peptidyl-tRNA hydrolase</fullName>
        <shortName evidence="1">Pth</shortName>
        <ecNumber evidence="1">3.1.1.29</ecNumber>
    </recommendedName>
</protein>
<accession>Q0T5J1</accession>
<name>PTH_SHIF8</name>
<dbReference type="EC" id="3.1.1.29" evidence="1"/>
<dbReference type="EMBL" id="CP000266">
    <property type="protein sequence ID" value="ABF03424.1"/>
    <property type="molecule type" value="Genomic_DNA"/>
</dbReference>
<dbReference type="RefSeq" id="WP_000152933.1">
    <property type="nucleotide sequence ID" value="NC_008258.1"/>
</dbReference>
<dbReference type="SMR" id="Q0T5J1"/>
<dbReference type="GeneID" id="93775269"/>
<dbReference type="KEGG" id="sfv:SFV_1218"/>
<dbReference type="HOGENOM" id="CLU_062456_3_1_6"/>
<dbReference type="Proteomes" id="UP000000659">
    <property type="component" value="Chromosome"/>
</dbReference>
<dbReference type="GO" id="GO:0005737">
    <property type="term" value="C:cytoplasm"/>
    <property type="evidence" value="ECO:0007669"/>
    <property type="project" value="UniProtKB-SubCell"/>
</dbReference>
<dbReference type="GO" id="GO:0004045">
    <property type="term" value="F:peptidyl-tRNA hydrolase activity"/>
    <property type="evidence" value="ECO:0007669"/>
    <property type="project" value="UniProtKB-UniRule"/>
</dbReference>
<dbReference type="GO" id="GO:0000049">
    <property type="term" value="F:tRNA binding"/>
    <property type="evidence" value="ECO:0007669"/>
    <property type="project" value="UniProtKB-UniRule"/>
</dbReference>
<dbReference type="GO" id="GO:0006515">
    <property type="term" value="P:protein quality control for misfolded or incompletely synthesized proteins"/>
    <property type="evidence" value="ECO:0007669"/>
    <property type="project" value="UniProtKB-UniRule"/>
</dbReference>
<dbReference type="GO" id="GO:0072344">
    <property type="term" value="P:rescue of stalled ribosome"/>
    <property type="evidence" value="ECO:0007669"/>
    <property type="project" value="UniProtKB-UniRule"/>
</dbReference>
<dbReference type="CDD" id="cd00462">
    <property type="entry name" value="PTH"/>
    <property type="match status" value="1"/>
</dbReference>
<dbReference type="FunFam" id="3.40.50.1470:FF:000001">
    <property type="entry name" value="Peptidyl-tRNA hydrolase"/>
    <property type="match status" value="1"/>
</dbReference>
<dbReference type="Gene3D" id="3.40.50.1470">
    <property type="entry name" value="Peptidyl-tRNA hydrolase"/>
    <property type="match status" value="1"/>
</dbReference>
<dbReference type="HAMAP" id="MF_00083">
    <property type="entry name" value="Pept_tRNA_hydro_bact"/>
    <property type="match status" value="1"/>
</dbReference>
<dbReference type="InterPro" id="IPR001328">
    <property type="entry name" value="Pept_tRNA_hydro"/>
</dbReference>
<dbReference type="InterPro" id="IPR018171">
    <property type="entry name" value="Pept_tRNA_hydro_CS"/>
</dbReference>
<dbReference type="InterPro" id="IPR036416">
    <property type="entry name" value="Pept_tRNA_hydro_sf"/>
</dbReference>
<dbReference type="NCBIfam" id="TIGR00447">
    <property type="entry name" value="pth"/>
    <property type="match status" value="1"/>
</dbReference>
<dbReference type="PANTHER" id="PTHR17224">
    <property type="entry name" value="PEPTIDYL-TRNA HYDROLASE"/>
    <property type="match status" value="1"/>
</dbReference>
<dbReference type="PANTHER" id="PTHR17224:SF1">
    <property type="entry name" value="PEPTIDYL-TRNA HYDROLASE"/>
    <property type="match status" value="1"/>
</dbReference>
<dbReference type="Pfam" id="PF01195">
    <property type="entry name" value="Pept_tRNA_hydro"/>
    <property type="match status" value="1"/>
</dbReference>
<dbReference type="SUPFAM" id="SSF53178">
    <property type="entry name" value="Peptidyl-tRNA hydrolase-like"/>
    <property type="match status" value="1"/>
</dbReference>
<dbReference type="PROSITE" id="PS01195">
    <property type="entry name" value="PEPT_TRNA_HYDROL_1"/>
    <property type="match status" value="1"/>
</dbReference>
<dbReference type="PROSITE" id="PS01196">
    <property type="entry name" value="PEPT_TRNA_HYDROL_2"/>
    <property type="match status" value="1"/>
</dbReference>
<comment type="function">
    <text evidence="1">Hydrolyzes ribosome-free peptidyl-tRNAs (with 1 or more amino acids incorporated), which drop off the ribosome during protein synthesis, or as a result of ribosome stalling.</text>
</comment>
<comment type="function">
    <text evidence="1">Catalyzes the release of premature peptidyl moieties from peptidyl-tRNA molecules trapped in stalled 50S ribosomal subunits, and thus maintains levels of free tRNAs and 50S ribosomes.</text>
</comment>
<comment type="catalytic activity">
    <reaction evidence="1">
        <text>an N-acyl-L-alpha-aminoacyl-tRNA + H2O = an N-acyl-L-amino acid + a tRNA + H(+)</text>
        <dbReference type="Rhea" id="RHEA:54448"/>
        <dbReference type="Rhea" id="RHEA-COMP:10123"/>
        <dbReference type="Rhea" id="RHEA-COMP:13883"/>
        <dbReference type="ChEBI" id="CHEBI:15377"/>
        <dbReference type="ChEBI" id="CHEBI:15378"/>
        <dbReference type="ChEBI" id="CHEBI:59874"/>
        <dbReference type="ChEBI" id="CHEBI:78442"/>
        <dbReference type="ChEBI" id="CHEBI:138191"/>
        <dbReference type="EC" id="3.1.1.29"/>
    </reaction>
</comment>
<comment type="subunit">
    <text evidence="1">Monomer.</text>
</comment>
<comment type="subcellular location">
    <subcellularLocation>
        <location evidence="1">Cytoplasm</location>
    </subcellularLocation>
</comment>
<comment type="similarity">
    <text evidence="1">Belongs to the PTH family.</text>
</comment>
<feature type="chain" id="PRO_1000010652" description="Peptidyl-tRNA hydrolase">
    <location>
        <begin position="1"/>
        <end position="194"/>
    </location>
</feature>
<feature type="active site" description="Proton acceptor" evidence="1">
    <location>
        <position position="21"/>
    </location>
</feature>
<feature type="binding site" evidence="1">
    <location>
        <position position="16"/>
    </location>
    <ligand>
        <name>tRNA</name>
        <dbReference type="ChEBI" id="CHEBI:17843"/>
    </ligand>
</feature>
<feature type="binding site" evidence="1">
    <location>
        <position position="67"/>
    </location>
    <ligand>
        <name>tRNA</name>
        <dbReference type="ChEBI" id="CHEBI:17843"/>
    </ligand>
</feature>
<feature type="binding site" evidence="1">
    <location>
        <position position="69"/>
    </location>
    <ligand>
        <name>tRNA</name>
        <dbReference type="ChEBI" id="CHEBI:17843"/>
    </ligand>
</feature>
<feature type="binding site" evidence="1">
    <location>
        <position position="115"/>
    </location>
    <ligand>
        <name>tRNA</name>
        <dbReference type="ChEBI" id="CHEBI:17843"/>
    </ligand>
</feature>
<feature type="site" description="Discriminates between blocked and unblocked aminoacyl-tRNA" evidence="1">
    <location>
        <position position="11"/>
    </location>
</feature>
<feature type="site" description="Stabilizes the basic form of H active site to accept a proton" evidence="1">
    <location>
        <position position="94"/>
    </location>
</feature>
<evidence type="ECO:0000255" key="1">
    <source>
        <dbReference type="HAMAP-Rule" id="MF_00083"/>
    </source>
</evidence>
<keyword id="KW-0963">Cytoplasm</keyword>
<keyword id="KW-0378">Hydrolase</keyword>
<keyword id="KW-0694">RNA-binding</keyword>
<keyword id="KW-0820">tRNA-binding</keyword>
<sequence length="194" mass="21082">MTIKLIVGLANPGAEYAATRHNAGAWFVDLLAERLRAPLREEAKFFGYTSRVTLGGEDVRLLVPTTFMNLSGKAVAAMASFFRINPDEILVAHDELDLPPGVAKFKLGGGHGGHNGLKDIISKLGNNPNFHRLRIGIGHPGDKNKVVGFVLGKPPVSEQKLIDEAIDEAARCTEMWFTDGLTKATNRLHAFKAQ</sequence>
<reference key="1">
    <citation type="journal article" date="2006" name="BMC Genomics">
        <title>Complete genome sequence of Shigella flexneri 5b and comparison with Shigella flexneri 2a.</title>
        <authorList>
            <person name="Nie H."/>
            <person name="Yang F."/>
            <person name="Zhang X."/>
            <person name="Yang J."/>
            <person name="Chen L."/>
            <person name="Wang J."/>
            <person name="Xiong Z."/>
            <person name="Peng J."/>
            <person name="Sun L."/>
            <person name="Dong J."/>
            <person name="Xue Y."/>
            <person name="Xu X."/>
            <person name="Chen S."/>
            <person name="Yao Z."/>
            <person name="Shen Y."/>
            <person name="Jin Q."/>
        </authorList>
    </citation>
    <scope>NUCLEOTIDE SEQUENCE [LARGE SCALE GENOMIC DNA]</scope>
    <source>
        <strain>8401</strain>
    </source>
</reference>
<gene>
    <name evidence="1" type="primary">pth</name>
    <name type="ordered locus">SFV_1218</name>
</gene>